<sequence length="296" mass="33747">MKTKIINLVVVTGMSGAGKTVAIQSFEDIGYFTIDNIPPSLVPKVIELLKHSEETDKIALVVDMRSRVFFDEINDILDQLESNEELNFKILFLDATDGELVSRYKETRRSHPLAADGRVLDGIKLERELLSPLKSLSQNVVDTTKLTPRQLRKAISEQFSSKQDQSSFRIEVLSFGFKYGLPLDADLVFDVRFLPNPYYDPTLRNLTGLDKEVYDFVMTHKESEDFYKNLNHLIKPILPGYQKEGKSVLTIAVGCTGGQHRSVAFAHRLAQDLKNDWTVNETHRDKDRRKETVNRS</sequence>
<gene>
    <name type="ordered locus">stu0831</name>
</gene>
<reference key="1">
    <citation type="journal article" date="2004" name="Nat. Biotechnol.">
        <title>Complete sequence and comparative genome analysis of the dairy bacterium Streptococcus thermophilus.</title>
        <authorList>
            <person name="Bolotin A."/>
            <person name="Quinquis B."/>
            <person name="Renault P."/>
            <person name="Sorokin A."/>
            <person name="Ehrlich S.D."/>
            <person name="Kulakauskas S."/>
            <person name="Lapidus A."/>
            <person name="Goltsman E."/>
            <person name="Mazur M."/>
            <person name="Pusch G.D."/>
            <person name="Fonstein M."/>
            <person name="Overbeek R."/>
            <person name="Kyprides N."/>
            <person name="Purnelle B."/>
            <person name="Prozzi D."/>
            <person name="Ngui K."/>
            <person name="Masuy D."/>
            <person name="Hancy F."/>
            <person name="Burteau S."/>
            <person name="Boutry M."/>
            <person name="Delcour J."/>
            <person name="Goffeau A."/>
            <person name="Hols P."/>
        </authorList>
    </citation>
    <scope>NUCLEOTIDE SEQUENCE [LARGE SCALE GENOMIC DNA]</scope>
    <source>
        <strain>ATCC BAA-250 / LMG 18311</strain>
    </source>
</reference>
<feature type="chain" id="PRO_0000107777" description="Nucleotide-binding protein stu0831">
    <location>
        <begin position="1"/>
        <end position="296"/>
    </location>
</feature>
<feature type="binding site" evidence="1">
    <location>
        <begin position="13"/>
        <end position="20"/>
    </location>
    <ligand>
        <name>ATP</name>
        <dbReference type="ChEBI" id="CHEBI:30616"/>
    </ligand>
</feature>
<feature type="binding site" evidence="1">
    <location>
        <begin position="63"/>
        <end position="66"/>
    </location>
    <ligand>
        <name>GTP</name>
        <dbReference type="ChEBI" id="CHEBI:37565"/>
    </ligand>
</feature>
<accession>Q5M4R9</accession>
<evidence type="ECO:0000255" key="1">
    <source>
        <dbReference type="HAMAP-Rule" id="MF_00636"/>
    </source>
</evidence>
<dbReference type="EMBL" id="CP000023">
    <property type="protein sequence ID" value="AAV60507.1"/>
    <property type="molecule type" value="Genomic_DNA"/>
</dbReference>
<dbReference type="SMR" id="Q5M4R9"/>
<dbReference type="STRING" id="264199.stu0831"/>
<dbReference type="KEGG" id="stl:stu0831"/>
<dbReference type="eggNOG" id="COG1660">
    <property type="taxonomic scope" value="Bacteria"/>
</dbReference>
<dbReference type="HOGENOM" id="CLU_059558_0_0_9"/>
<dbReference type="Proteomes" id="UP000001170">
    <property type="component" value="Chromosome"/>
</dbReference>
<dbReference type="GO" id="GO:0005524">
    <property type="term" value="F:ATP binding"/>
    <property type="evidence" value="ECO:0007669"/>
    <property type="project" value="UniProtKB-UniRule"/>
</dbReference>
<dbReference type="GO" id="GO:0005525">
    <property type="term" value="F:GTP binding"/>
    <property type="evidence" value="ECO:0007669"/>
    <property type="project" value="UniProtKB-UniRule"/>
</dbReference>
<dbReference type="Gene3D" id="3.40.50.300">
    <property type="entry name" value="P-loop containing nucleotide triphosphate hydrolases"/>
    <property type="match status" value="1"/>
</dbReference>
<dbReference type="HAMAP" id="MF_00636">
    <property type="entry name" value="RapZ_like"/>
    <property type="match status" value="1"/>
</dbReference>
<dbReference type="InterPro" id="IPR027417">
    <property type="entry name" value="P-loop_NTPase"/>
</dbReference>
<dbReference type="InterPro" id="IPR005337">
    <property type="entry name" value="RapZ-like"/>
</dbReference>
<dbReference type="InterPro" id="IPR053930">
    <property type="entry name" value="RapZ-like_N"/>
</dbReference>
<dbReference type="InterPro" id="IPR053931">
    <property type="entry name" value="RapZ_C"/>
</dbReference>
<dbReference type="NCBIfam" id="NF003828">
    <property type="entry name" value="PRK05416.1"/>
    <property type="match status" value="1"/>
</dbReference>
<dbReference type="PANTHER" id="PTHR30448">
    <property type="entry name" value="RNASE ADAPTER PROTEIN RAPZ"/>
    <property type="match status" value="1"/>
</dbReference>
<dbReference type="PANTHER" id="PTHR30448:SF0">
    <property type="entry name" value="RNASE ADAPTER PROTEIN RAPZ"/>
    <property type="match status" value="1"/>
</dbReference>
<dbReference type="Pfam" id="PF22740">
    <property type="entry name" value="PapZ_C"/>
    <property type="match status" value="1"/>
</dbReference>
<dbReference type="Pfam" id="PF03668">
    <property type="entry name" value="RapZ-like_N"/>
    <property type="match status" value="1"/>
</dbReference>
<dbReference type="PIRSF" id="PIRSF005052">
    <property type="entry name" value="P-loopkin"/>
    <property type="match status" value="1"/>
</dbReference>
<dbReference type="SUPFAM" id="SSF52540">
    <property type="entry name" value="P-loop containing nucleoside triphosphate hydrolases"/>
    <property type="match status" value="1"/>
</dbReference>
<keyword id="KW-0067">ATP-binding</keyword>
<keyword id="KW-0342">GTP-binding</keyword>
<keyword id="KW-0547">Nucleotide-binding</keyword>
<keyword id="KW-1185">Reference proteome</keyword>
<organism>
    <name type="scientific">Streptococcus thermophilus (strain ATCC BAA-250 / LMG 18311)</name>
    <dbReference type="NCBI Taxonomy" id="264199"/>
    <lineage>
        <taxon>Bacteria</taxon>
        <taxon>Bacillati</taxon>
        <taxon>Bacillota</taxon>
        <taxon>Bacilli</taxon>
        <taxon>Lactobacillales</taxon>
        <taxon>Streptococcaceae</taxon>
        <taxon>Streptococcus</taxon>
    </lineage>
</organism>
<proteinExistence type="inferred from homology"/>
<protein>
    <recommendedName>
        <fullName evidence="1">Nucleotide-binding protein stu0831</fullName>
    </recommendedName>
</protein>
<comment type="function">
    <text evidence="1">Displays ATPase and GTPase activities.</text>
</comment>
<comment type="similarity">
    <text evidence="1">Belongs to the RapZ-like family.</text>
</comment>
<name>Y831_STRT2</name>